<keyword id="KW-0378">Hydrolase</keyword>
<feature type="chain" id="PRO_1000165036" description="Formamidase">
    <location>
        <begin position="1"/>
        <end position="332"/>
    </location>
</feature>
<feature type="domain" description="CN hydrolase" evidence="2">
    <location>
        <begin position="14"/>
        <end position="259"/>
    </location>
</feature>
<feature type="active site" description="Proton acceptor" evidence="1">
    <location>
        <position position="60"/>
    </location>
</feature>
<feature type="active site" description="Proton donor" evidence="1">
    <location>
        <position position="132"/>
    </location>
</feature>
<feature type="active site" description="Nucleophile" evidence="1">
    <location>
        <position position="165"/>
    </location>
</feature>
<proteinExistence type="inferred from homology"/>
<gene>
    <name evidence="1" type="primary">amiF</name>
    <name type="ordered locus">BAA_4174</name>
</gene>
<name>AMIF_BACAA</name>
<protein>
    <recommendedName>
        <fullName evidence="1">Formamidase</fullName>
        <ecNumber evidence="1">3.5.1.49</ecNumber>
    </recommendedName>
    <alternativeName>
        <fullName evidence="1">Formamide amidohydrolase</fullName>
    </alternativeName>
</protein>
<dbReference type="EC" id="3.5.1.49" evidence="1"/>
<dbReference type="EMBL" id="CP001598">
    <property type="protein sequence ID" value="ACQ49426.1"/>
    <property type="molecule type" value="Genomic_DNA"/>
</dbReference>
<dbReference type="RefSeq" id="WP_000535791.1">
    <property type="nucleotide sequence ID" value="NC_012659.1"/>
</dbReference>
<dbReference type="SMR" id="C3P6U6"/>
<dbReference type="GeneID" id="45023826"/>
<dbReference type="KEGG" id="bai:BAA_4174"/>
<dbReference type="HOGENOM" id="CLU_071797_0_0_9"/>
<dbReference type="GO" id="GO:0004328">
    <property type="term" value="F:formamidase activity"/>
    <property type="evidence" value="ECO:0007669"/>
    <property type="project" value="UniProtKB-UniRule"/>
</dbReference>
<dbReference type="GO" id="GO:0050126">
    <property type="term" value="F:N-carbamoylputrescine amidase activity"/>
    <property type="evidence" value="ECO:0007669"/>
    <property type="project" value="TreeGrafter"/>
</dbReference>
<dbReference type="GO" id="GO:0033388">
    <property type="term" value="P:putrescine biosynthetic process from arginine"/>
    <property type="evidence" value="ECO:0007669"/>
    <property type="project" value="TreeGrafter"/>
</dbReference>
<dbReference type="CDD" id="cd07565">
    <property type="entry name" value="aliphatic_amidase"/>
    <property type="match status" value="1"/>
</dbReference>
<dbReference type="Gene3D" id="3.60.110.10">
    <property type="entry name" value="Carbon-nitrogen hydrolase"/>
    <property type="match status" value="1"/>
</dbReference>
<dbReference type="HAMAP" id="MF_01243">
    <property type="entry name" value="Formamidase"/>
    <property type="match status" value="1"/>
</dbReference>
<dbReference type="InterPro" id="IPR050345">
    <property type="entry name" value="Aliph_Amidase/BUP"/>
</dbReference>
<dbReference type="InterPro" id="IPR003010">
    <property type="entry name" value="C-N_Hydrolase"/>
</dbReference>
<dbReference type="InterPro" id="IPR036526">
    <property type="entry name" value="C-N_Hydrolase_sf"/>
</dbReference>
<dbReference type="InterPro" id="IPR022843">
    <property type="entry name" value="Formamidase"/>
</dbReference>
<dbReference type="NCBIfam" id="NF009803">
    <property type="entry name" value="PRK13287.1"/>
    <property type="match status" value="1"/>
</dbReference>
<dbReference type="PANTHER" id="PTHR43674:SF15">
    <property type="entry name" value="FORMAMIDASE"/>
    <property type="match status" value="1"/>
</dbReference>
<dbReference type="PANTHER" id="PTHR43674">
    <property type="entry name" value="NITRILASE C965.09-RELATED"/>
    <property type="match status" value="1"/>
</dbReference>
<dbReference type="Pfam" id="PF00795">
    <property type="entry name" value="CN_hydrolase"/>
    <property type="match status" value="1"/>
</dbReference>
<dbReference type="SUPFAM" id="SSF56317">
    <property type="entry name" value="Carbon-nitrogen hydrolase"/>
    <property type="match status" value="1"/>
</dbReference>
<dbReference type="PROSITE" id="PS50263">
    <property type="entry name" value="CN_HYDROLASE"/>
    <property type="match status" value="1"/>
</dbReference>
<reference key="1">
    <citation type="submission" date="2009-04" db="EMBL/GenBank/DDBJ databases">
        <title>Genome sequence of Bacillus anthracis A0248.</title>
        <authorList>
            <person name="Dodson R.J."/>
            <person name="Munk A.C."/>
            <person name="Bruce D."/>
            <person name="Detter C."/>
            <person name="Tapia R."/>
            <person name="Sutton G."/>
            <person name="Sims D."/>
            <person name="Brettin T."/>
        </authorList>
    </citation>
    <scope>NUCLEOTIDE SEQUENCE [LARGE SCALE GENOMIC DNA]</scope>
    <source>
        <strain>A0248</strain>
    </source>
</reference>
<organism>
    <name type="scientific">Bacillus anthracis (strain A0248)</name>
    <dbReference type="NCBI Taxonomy" id="592021"/>
    <lineage>
        <taxon>Bacteria</taxon>
        <taxon>Bacillati</taxon>
        <taxon>Bacillota</taxon>
        <taxon>Bacilli</taxon>
        <taxon>Bacillales</taxon>
        <taxon>Bacillaceae</taxon>
        <taxon>Bacillus</taxon>
        <taxon>Bacillus cereus group</taxon>
    </lineage>
</organism>
<sequence>MGSSGSMVKPISGFLTALIQYPVPVVESRADIDKQIKQIIKTIHSTKAGYPGLELIVFPEYSTQGLNTKKWTTEEFLCTVPGPETDLFAEACKESEVYGVFSIMERNPDGGEPYNTAIIIDPQGEMILKYRKLNPWVPVEPWKAGDLGLPVCDGPGGSKLAVCICHDGMFPEVAREAAYKGANVLIRISGYSTQVSEQWMLTNRSNAWQNLMYTLSVNLAGYDGVFYYFGEGQVCNFDGTTLVQGHRNPWEIVTAEVYPELADQARLGWGLENNIYNLGSRGYVATPGGVKENPYTFVKDLAEGKYKVPWEDEIKVKDGTIYGYPVKKTIHS</sequence>
<comment type="function">
    <text evidence="1">Is an aliphatic amidase with a restricted substrate specificity, as it only hydrolyzes formamide.</text>
</comment>
<comment type="catalytic activity">
    <reaction evidence="1">
        <text>formamide + H2O = formate + NH4(+)</text>
        <dbReference type="Rhea" id="RHEA:21948"/>
        <dbReference type="ChEBI" id="CHEBI:15377"/>
        <dbReference type="ChEBI" id="CHEBI:15740"/>
        <dbReference type="ChEBI" id="CHEBI:16397"/>
        <dbReference type="ChEBI" id="CHEBI:28938"/>
        <dbReference type="EC" id="3.5.1.49"/>
    </reaction>
</comment>
<comment type="similarity">
    <text evidence="1">Belongs to the carbon-nitrogen hydrolase superfamily. Aliphatic amidase family.</text>
</comment>
<evidence type="ECO:0000255" key="1">
    <source>
        <dbReference type="HAMAP-Rule" id="MF_01243"/>
    </source>
</evidence>
<evidence type="ECO:0000255" key="2">
    <source>
        <dbReference type="PROSITE-ProRule" id="PRU00054"/>
    </source>
</evidence>
<accession>C3P6U6</accession>